<reference key="1">
    <citation type="submission" date="2008-08" db="EMBL/GenBank/DDBJ databases">
        <title>Complete sequence of Vibrio fischeri strain MJ11.</title>
        <authorList>
            <person name="Mandel M.J."/>
            <person name="Stabb E.V."/>
            <person name="Ruby E.G."/>
            <person name="Ferriera S."/>
            <person name="Johnson J."/>
            <person name="Kravitz S."/>
            <person name="Beeson K."/>
            <person name="Sutton G."/>
            <person name="Rogers Y.-H."/>
            <person name="Friedman R."/>
            <person name="Frazier M."/>
            <person name="Venter J.C."/>
        </authorList>
    </citation>
    <scope>NUCLEOTIDE SEQUENCE [LARGE SCALE GENOMIC DNA]</scope>
    <source>
        <strain>MJ11</strain>
    </source>
</reference>
<keyword id="KW-0067">ATP-binding</keyword>
<keyword id="KW-0319">Glycerol metabolism</keyword>
<keyword id="KW-0418">Kinase</keyword>
<keyword id="KW-0547">Nucleotide-binding</keyword>
<keyword id="KW-0808">Transferase</keyword>
<name>GLPK_ALIFM</name>
<protein>
    <recommendedName>
        <fullName evidence="1">Glycerol kinase</fullName>
        <ecNumber evidence="1">2.7.1.30</ecNumber>
    </recommendedName>
    <alternativeName>
        <fullName evidence="1">ATP:glycerol 3-phosphotransferase</fullName>
    </alternativeName>
    <alternativeName>
        <fullName evidence="1">Glycerokinase</fullName>
        <shortName evidence="1">GK</shortName>
    </alternativeName>
</protein>
<dbReference type="EC" id="2.7.1.30" evidence="1"/>
<dbReference type="EMBL" id="CP001133">
    <property type="protein sequence ID" value="ACH64306.1"/>
    <property type="molecule type" value="Genomic_DNA"/>
</dbReference>
<dbReference type="RefSeq" id="WP_012535407.1">
    <property type="nucleotide sequence ID" value="NC_011186.1"/>
</dbReference>
<dbReference type="SMR" id="B5ET10"/>
<dbReference type="KEGG" id="vfm:VFMJ11_A0271"/>
<dbReference type="HOGENOM" id="CLU_009281_2_3_6"/>
<dbReference type="UniPathway" id="UPA00618">
    <property type="reaction ID" value="UER00672"/>
</dbReference>
<dbReference type="Proteomes" id="UP000001857">
    <property type="component" value="Chromosome II"/>
</dbReference>
<dbReference type="GO" id="GO:0005829">
    <property type="term" value="C:cytosol"/>
    <property type="evidence" value="ECO:0007669"/>
    <property type="project" value="TreeGrafter"/>
</dbReference>
<dbReference type="GO" id="GO:0005524">
    <property type="term" value="F:ATP binding"/>
    <property type="evidence" value="ECO:0007669"/>
    <property type="project" value="UniProtKB-UniRule"/>
</dbReference>
<dbReference type="GO" id="GO:0004370">
    <property type="term" value="F:glycerol kinase activity"/>
    <property type="evidence" value="ECO:0000250"/>
    <property type="project" value="UniProtKB"/>
</dbReference>
<dbReference type="GO" id="GO:0019563">
    <property type="term" value="P:glycerol catabolic process"/>
    <property type="evidence" value="ECO:0007669"/>
    <property type="project" value="UniProtKB-UniRule"/>
</dbReference>
<dbReference type="GO" id="GO:0006071">
    <property type="term" value="P:glycerol metabolic process"/>
    <property type="evidence" value="ECO:0000250"/>
    <property type="project" value="UniProtKB"/>
</dbReference>
<dbReference type="GO" id="GO:0006072">
    <property type="term" value="P:glycerol-3-phosphate metabolic process"/>
    <property type="evidence" value="ECO:0007669"/>
    <property type="project" value="InterPro"/>
</dbReference>
<dbReference type="CDD" id="cd07769">
    <property type="entry name" value="ASKHA_NBD_FGGY_GK"/>
    <property type="match status" value="1"/>
</dbReference>
<dbReference type="FunFam" id="3.30.420.40:FF:000007">
    <property type="entry name" value="Glycerol kinase"/>
    <property type="match status" value="1"/>
</dbReference>
<dbReference type="FunFam" id="3.30.420.40:FF:000008">
    <property type="entry name" value="Glycerol kinase"/>
    <property type="match status" value="1"/>
</dbReference>
<dbReference type="Gene3D" id="3.30.420.40">
    <property type="match status" value="2"/>
</dbReference>
<dbReference type="HAMAP" id="MF_00186">
    <property type="entry name" value="Glycerol_kin"/>
    <property type="match status" value="1"/>
</dbReference>
<dbReference type="InterPro" id="IPR043129">
    <property type="entry name" value="ATPase_NBD"/>
</dbReference>
<dbReference type="InterPro" id="IPR000577">
    <property type="entry name" value="Carb_kinase_FGGY"/>
</dbReference>
<dbReference type="InterPro" id="IPR018483">
    <property type="entry name" value="Carb_kinase_FGGY_CS"/>
</dbReference>
<dbReference type="InterPro" id="IPR018485">
    <property type="entry name" value="FGGY_C"/>
</dbReference>
<dbReference type="InterPro" id="IPR018484">
    <property type="entry name" value="FGGY_N"/>
</dbReference>
<dbReference type="InterPro" id="IPR005999">
    <property type="entry name" value="Glycerol_kin"/>
</dbReference>
<dbReference type="NCBIfam" id="TIGR01311">
    <property type="entry name" value="glycerol_kin"/>
    <property type="match status" value="1"/>
</dbReference>
<dbReference type="NCBIfam" id="NF000756">
    <property type="entry name" value="PRK00047.1"/>
    <property type="match status" value="1"/>
</dbReference>
<dbReference type="PANTHER" id="PTHR10196:SF69">
    <property type="entry name" value="GLYCEROL KINASE"/>
    <property type="match status" value="1"/>
</dbReference>
<dbReference type="PANTHER" id="PTHR10196">
    <property type="entry name" value="SUGAR KINASE"/>
    <property type="match status" value="1"/>
</dbReference>
<dbReference type="Pfam" id="PF02782">
    <property type="entry name" value="FGGY_C"/>
    <property type="match status" value="1"/>
</dbReference>
<dbReference type="Pfam" id="PF00370">
    <property type="entry name" value="FGGY_N"/>
    <property type="match status" value="1"/>
</dbReference>
<dbReference type="PIRSF" id="PIRSF000538">
    <property type="entry name" value="GlpK"/>
    <property type="match status" value="1"/>
</dbReference>
<dbReference type="SUPFAM" id="SSF53067">
    <property type="entry name" value="Actin-like ATPase domain"/>
    <property type="match status" value="2"/>
</dbReference>
<dbReference type="PROSITE" id="PS00933">
    <property type="entry name" value="FGGY_KINASES_1"/>
    <property type="match status" value="1"/>
</dbReference>
<dbReference type="PROSITE" id="PS00445">
    <property type="entry name" value="FGGY_KINASES_2"/>
    <property type="match status" value="1"/>
</dbReference>
<feature type="chain" id="PRO_1000098772" description="Glycerol kinase">
    <location>
        <begin position="1"/>
        <end position="504"/>
    </location>
</feature>
<feature type="binding site" evidence="1">
    <location>
        <position position="14"/>
    </location>
    <ligand>
        <name>ADP</name>
        <dbReference type="ChEBI" id="CHEBI:456216"/>
    </ligand>
</feature>
<feature type="binding site" evidence="1">
    <location>
        <position position="14"/>
    </location>
    <ligand>
        <name>ATP</name>
        <dbReference type="ChEBI" id="CHEBI:30616"/>
    </ligand>
</feature>
<feature type="binding site" evidence="1">
    <location>
        <position position="14"/>
    </location>
    <ligand>
        <name>sn-glycerol 3-phosphate</name>
        <dbReference type="ChEBI" id="CHEBI:57597"/>
    </ligand>
</feature>
<feature type="binding site" evidence="1">
    <location>
        <position position="15"/>
    </location>
    <ligand>
        <name>ATP</name>
        <dbReference type="ChEBI" id="CHEBI:30616"/>
    </ligand>
</feature>
<feature type="binding site" evidence="1">
    <location>
        <position position="16"/>
    </location>
    <ligand>
        <name>ATP</name>
        <dbReference type="ChEBI" id="CHEBI:30616"/>
    </ligand>
</feature>
<feature type="binding site" evidence="1">
    <location>
        <position position="18"/>
    </location>
    <ligand>
        <name>ADP</name>
        <dbReference type="ChEBI" id="CHEBI:456216"/>
    </ligand>
</feature>
<feature type="binding site" evidence="1">
    <location>
        <position position="84"/>
    </location>
    <ligand>
        <name>glycerol</name>
        <dbReference type="ChEBI" id="CHEBI:17754"/>
    </ligand>
</feature>
<feature type="binding site" evidence="1">
    <location>
        <position position="84"/>
    </location>
    <ligand>
        <name>sn-glycerol 3-phosphate</name>
        <dbReference type="ChEBI" id="CHEBI:57597"/>
    </ligand>
</feature>
<feature type="binding site" evidence="1">
    <location>
        <position position="85"/>
    </location>
    <ligand>
        <name>glycerol</name>
        <dbReference type="ChEBI" id="CHEBI:17754"/>
    </ligand>
</feature>
<feature type="binding site" evidence="1">
    <location>
        <position position="85"/>
    </location>
    <ligand>
        <name>sn-glycerol 3-phosphate</name>
        <dbReference type="ChEBI" id="CHEBI:57597"/>
    </ligand>
</feature>
<feature type="binding site" evidence="1">
    <location>
        <position position="136"/>
    </location>
    <ligand>
        <name>glycerol</name>
        <dbReference type="ChEBI" id="CHEBI:17754"/>
    </ligand>
</feature>
<feature type="binding site" evidence="1">
    <location>
        <position position="136"/>
    </location>
    <ligand>
        <name>sn-glycerol 3-phosphate</name>
        <dbReference type="ChEBI" id="CHEBI:57597"/>
    </ligand>
</feature>
<feature type="binding site" evidence="1">
    <location>
        <position position="246"/>
    </location>
    <ligand>
        <name>glycerol</name>
        <dbReference type="ChEBI" id="CHEBI:17754"/>
    </ligand>
</feature>
<feature type="binding site" evidence="1">
    <location>
        <position position="246"/>
    </location>
    <ligand>
        <name>sn-glycerol 3-phosphate</name>
        <dbReference type="ChEBI" id="CHEBI:57597"/>
    </ligand>
</feature>
<feature type="binding site" evidence="1">
    <location>
        <position position="247"/>
    </location>
    <ligand>
        <name>glycerol</name>
        <dbReference type="ChEBI" id="CHEBI:17754"/>
    </ligand>
</feature>
<feature type="binding site" evidence="1">
    <location>
        <position position="268"/>
    </location>
    <ligand>
        <name>ADP</name>
        <dbReference type="ChEBI" id="CHEBI:456216"/>
    </ligand>
</feature>
<feature type="binding site" evidence="1">
    <location>
        <position position="268"/>
    </location>
    <ligand>
        <name>ATP</name>
        <dbReference type="ChEBI" id="CHEBI:30616"/>
    </ligand>
</feature>
<feature type="binding site" evidence="1">
    <location>
        <position position="311"/>
    </location>
    <ligand>
        <name>ADP</name>
        <dbReference type="ChEBI" id="CHEBI:456216"/>
    </ligand>
</feature>
<feature type="binding site" evidence="1">
    <location>
        <position position="311"/>
    </location>
    <ligand>
        <name>ATP</name>
        <dbReference type="ChEBI" id="CHEBI:30616"/>
    </ligand>
</feature>
<feature type="binding site" evidence="1">
    <location>
        <position position="315"/>
    </location>
    <ligand>
        <name>ATP</name>
        <dbReference type="ChEBI" id="CHEBI:30616"/>
    </ligand>
</feature>
<feature type="binding site" evidence="1">
    <location>
        <position position="412"/>
    </location>
    <ligand>
        <name>ADP</name>
        <dbReference type="ChEBI" id="CHEBI:456216"/>
    </ligand>
</feature>
<feature type="binding site" evidence="1">
    <location>
        <position position="412"/>
    </location>
    <ligand>
        <name>ATP</name>
        <dbReference type="ChEBI" id="CHEBI:30616"/>
    </ligand>
</feature>
<feature type="binding site" evidence="1">
    <location>
        <position position="416"/>
    </location>
    <ligand>
        <name>ADP</name>
        <dbReference type="ChEBI" id="CHEBI:456216"/>
    </ligand>
</feature>
<organism>
    <name type="scientific">Aliivibrio fischeri (strain MJ11)</name>
    <name type="common">Vibrio fischeri</name>
    <dbReference type="NCBI Taxonomy" id="388396"/>
    <lineage>
        <taxon>Bacteria</taxon>
        <taxon>Pseudomonadati</taxon>
        <taxon>Pseudomonadota</taxon>
        <taxon>Gammaproteobacteria</taxon>
        <taxon>Vibrionales</taxon>
        <taxon>Vibrionaceae</taxon>
        <taxon>Aliivibrio</taxon>
    </lineage>
</organism>
<gene>
    <name evidence="1" type="primary">glpK</name>
    <name type="ordered locus">VFMJ11_A0271</name>
</gene>
<sequence>MTEQKYIVALDQGTTSSRAVILDHDANIVSVSQREFTQIYPEAGWVEHDPLEIYATQSSTLVETLAKAGIRSDQIAGIGITNQRETTIVWNKETGKPVYNAIVWQCRRTADTCEKLKEAGLEEYIRENTGLVVDPYFSGTKIKWILDNVEGAREDAEAGKLLFGTVDTWLVWKMTQGRVHVTDYTNASRTMVFNINTLQWDEKLLKELDIPLSMMPEVKSSSEVYGETNIGGKGGTRIPIAGIAGDQQAALYGQMCVEQGQAKNTYGTGCFLLMNTGKEKVTSRNGLLTTLACGPRGEASYALEGAVFMGGASIQWLRDEMKLLADAKDSEYFATKVDTSNGVYVVPAFTGLGAPYWDAYARGTIVGLTRGCGSNHIIRATLESIAYQTRDVIDAMQADSGIKLSALRVDGGAVANNFLMQFQSDVLDVAVHRSKVTEVTALGAAYLAGLAVGFWNGLDELADKAVIDRSFEPHHDEEKRNQRYRGWKRAVKCAQSWAELHDEE</sequence>
<proteinExistence type="inferred from homology"/>
<comment type="function">
    <text evidence="1">Key enzyme in the regulation of glycerol uptake and metabolism. Catalyzes the phosphorylation of glycerol to yield sn-glycerol 3-phosphate.</text>
</comment>
<comment type="catalytic activity">
    <reaction evidence="1">
        <text>glycerol + ATP = sn-glycerol 3-phosphate + ADP + H(+)</text>
        <dbReference type="Rhea" id="RHEA:21644"/>
        <dbReference type="ChEBI" id="CHEBI:15378"/>
        <dbReference type="ChEBI" id="CHEBI:17754"/>
        <dbReference type="ChEBI" id="CHEBI:30616"/>
        <dbReference type="ChEBI" id="CHEBI:57597"/>
        <dbReference type="ChEBI" id="CHEBI:456216"/>
        <dbReference type="EC" id="2.7.1.30"/>
    </reaction>
</comment>
<comment type="activity regulation">
    <text evidence="1">Inhibited by fructose 1,6-bisphosphate (FBP).</text>
</comment>
<comment type="pathway">
    <text evidence="1">Polyol metabolism; glycerol degradation via glycerol kinase pathway; sn-glycerol 3-phosphate from glycerol: step 1/1.</text>
</comment>
<comment type="similarity">
    <text evidence="1">Belongs to the FGGY kinase family.</text>
</comment>
<evidence type="ECO:0000255" key="1">
    <source>
        <dbReference type="HAMAP-Rule" id="MF_00186"/>
    </source>
</evidence>
<accession>B5ET10</accession>